<accession>B4SYR2</accession>
<reference key="1">
    <citation type="journal article" date="2011" name="J. Bacteriol.">
        <title>Comparative genomics of 28 Salmonella enterica isolates: evidence for CRISPR-mediated adaptive sublineage evolution.</title>
        <authorList>
            <person name="Fricke W.F."/>
            <person name="Mammel M.K."/>
            <person name="McDermott P.F."/>
            <person name="Tartera C."/>
            <person name="White D.G."/>
            <person name="Leclerc J.E."/>
            <person name="Ravel J."/>
            <person name="Cebula T.A."/>
        </authorList>
    </citation>
    <scope>NUCLEOTIDE SEQUENCE [LARGE SCALE GENOMIC DNA]</scope>
    <source>
        <strain>SL254</strain>
    </source>
</reference>
<name>NDPA_SALNS</name>
<gene>
    <name evidence="1" type="primary">yejK</name>
    <name type="ordered locus">SNSL254_A2420</name>
</gene>
<protein>
    <recommendedName>
        <fullName evidence="1">Nucleoid-associated protein YejK</fullName>
    </recommendedName>
</protein>
<keyword id="KW-0963">Cytoplasm</keyword>
<comment type="subcellular location">
    <subcellularLocation>
        <location evidence="1">Cytoplasm</location>
        <location evidence="1">Nucleoid</location>
    </subcellularLocation>
</comment>
<comment type="similarity">
    <text evidence="1">Belongs to the YejK family.</text>
</comment>
<feature type="chain" id="PRO_1000132732" description="Nucleoid-associated protein YejK">
    <location>
        <begin position="1"/>
        <end position="335"/>
    </location>
</feature>
<organism>
    <name type="scientific">Salmonella newport (strain SL254)</name>
    <dbReference type="NCBI Taxonomy" id="423368"/>
    <lineage>
        <taxon>Bacteria</taxon>
        <taxon>Pseudomonadati</taxon>
        <taxon>Pseudomonadota</taxon>
        <taxon>Gammaproteobacteria</taxon>
        <taxon>Enterobacterales</taxon>
        <taxon>Enterobacteriaceae</taxon>
        <taxon>Salmonella</taxon>
    </lineage>
</organism>
<evidence type="ECO:0000255" key="1">
    <source>
        <dbReference type="HAMAP-Rule" id="MF_00730"/>
    </source>
</evidence>
<sequence>MSLDINQIALHQLIKRDEQNLELVLRDSLLEPTTTVVEMVAELHRVYSAKNKAYGLFNEESELAQALRLQRQGEEDFLAFSRAATGRLRDELAKYPFADGGIVLFCHYRYLAVEYLLVTVLNNLSSMRVNENLDINPTHYLDINHADIVARIDLTEWETNPQSTRYLTFLKGRVGRKVADFFMDFLGASEGLNAKAQNRGLLQAVDDFTAEAQLDKAERQNVRQQVYSYCNEQLQAGEEIELESLSKELSGVSEVSFSEFTAEKGYELEESFPADRSTLRQLTKYAGSGGGLTINFDAMLLGERIFWDPATDTLTIKGTPPNLRDQLQRRTSGGK</sequence>
<dbReference type="EMBL" id="CP001113">
    <property type="protein sequence ID" value="ACF62445.1"/>
    <property type="molecule type" value="Genomic_DNA"/>
</dbReference>
<dbReference type="RefSeq" id="WP_000050806.1">
    <property type="nucleotide sequence ID" value="NZ_CCMR01000002.1"/>
</dbReference>
<dbReference type="SMR" id="B4SYR2"/>
<dbReference type="KEGG" id="see:SNSL254_A2420"/>
<dbReference type="HOGENOM" id="CLU_063050_0_1_6"/>
<dbReference type="Proteomes" id="UP000008824">
    <property type="component" value="Chromosome"/>
</dbReference>
<dbReference type="GO" id="GO:0043590">
    <property type="term" value="C:bacterial nucleoid"/>
    <property type="evidence" value="ECO:0007669"/>
    <property type="project" value="TreeGrafter"/>
</dbReference>
<dbReference type="GO" id="GO:0005737">
    <property type="term" value="C:cytoplasm"/>
    <property type="evidence" value="ECO:0007669"/>
    <property type="project" value="UniProtKB-UniRule"/>
</dbReference>
<dbReference type="GO" id="GO:0003690">
    <property type="term" value="F:double-stranded DNA binding"/>
    <property type="evidence" value="ECO:0007669"/>
    <property type="project" value="TreeGrafter"/>
</dbReference>
<dbReference type="GO" id="GO:0003727">
    <property type="term" value="F:single-stranded RNA binding"/>
    <property type="evidence" value="ECO:0007669"/>
    <property type="project" value="TreeGrafter"/>
</dbReference>
<dbReference type="HAMAP" id="MF_00730">
    <property type="entry name" value="NdpA"/>
    <property type="match status" value="1"/>
</dbReference>
<dbReference type="InterPro" id="IPR007358">
    <property type="entry name" value="Nucleoid_associated_NdpA"/>
</dbReference>
<dbReference type="NCBIfam" id="NF001557">
    <property type="entry name" value="PRK00378.1"/>
    <property type="match status" value="1"/>
</dbReference>
<dbReference type="PANTHER" id="PTHR38772">
    <property type="match status" value="1"/>
</dbReference>
<dbReference type="PANTHER" id="PTHR38772:SF1">
    <property type="entry name" value="NUCLEOID-ASSOCIATED PROTEIN YEJK"/>
    <property type="match status" value="1"/>
</dbReference>
<dbReference type="Pfam" id="PF04245">
    <property type="entry name" value="NA37"/>
    <property type="match status" value="1"/>
</dbReference>
<proteinExistence type="inferred from homology"/>